<reference key="1">
    <citation type="journal article" date="2001" name="Science">
        <title>An iron-regulated ferric reductase associated with the absorption of dietary iron.</title>
        <authorList>
            <person name="McKie A.T."/>
            <person name="Barrow D."/>
            <person name="Latunde-Dada G.O."/>
            <person name="Rolfs A."/>
            <person name="Sager G."/>
            <person name="Mudaly E."/>
            <person name="Mudaly M."/>
            <person name="Richardson C."/>
            <person name="Barlow D."/>
            <person name="Bomford A."/>
            <person name="Peters T.J."/>
            <person name="Raja K.B."/>
            <person name="Shirali S."/>
            <person name="Hediger M.A."/>
            <person name="Farzaneh F."/>
            <person name="Simpson R.J."/>
        </authorList>
    </citation>
    <scope>NUCLEOTIDE SEQUENCE [MRNA] (ISOFORM 1)</scope>
    <scope>FUNCTION</scope>
    <scope>SUBCELLULAR LOCATION</scope>
    <scope>TISSUE SPECIFICITY</scope>
    <scope>INDUCTION</scope>
</reference>
<reference key="2">
    <citation type="journal article" date="2005" name="Science">
        <title>The transcriptional landscape of the mammalian genome.</title>
        <authorList>
            <person name="Carninci P."/>
            <person name="Kasukawa T."/>
            <person name="Katayama S."/>
            <person name="Gough J."/>
            <person name="Frith M.C."/>
            <person name="Maeda N."/>
            <person name="Oyama R."/>
            <person name="Ravasi T."/>
            <person name="Lenhard B."/>
            <person name="Wells C."/>
            <person name="Kodzius R."/>
            <person name="Shimokawa K."/>
            <person name="Bajic V.B."/>
            <person name="Brenner S.E."/>
            <person name="Batalov S."/>
            <person name="Forrest A.R."/>
            <person name="Zavolan M."/>
            <person name="Davis M.J."/>
            <person name="Wilming L.G."/>
            <person name="Aidinis V."/>
            <person name="Allen J.E."/>
            <person name="Ambesi-Impiombato A."/>
            <person name="Apweiler R."/>
            <person name="Aturaliya R.N."/>
            <person name="Bailey T.L."/>
            <person name="Bansal M."/>
            <person name="Baxter L."/>
            <person name="Beisel K.W."/>
            <person name="Bersano T."/>
            <person name="Bono H."/>
            <person name="Chalk A.M."/>
            <person name="Chiu K.P."/>
            <person name="Choudhary V."/>
            <person name="Christoffels A."/>
            <person name="Clutterbuck D.R."/>
            <person name="Crowe M.L."/>
            <person name="Dalla E."/>
            <person name="Dalrymple B.P."/>
            <person name="de Bono B."/>
            <person name="Della Gatta G."/>
            <person name="di Bernardo D."/>
            <person name="Down T."/>
            <person name="Engstrom P."/>
            <person name="Fagiolini M."/>
            <person name="Faulkner G."/>
            <person name="Fletcher C.F."/>
            <person name="Fukushima T."/>
            <person name="Furuno M."/>
            <person name="Futaki S."/>
            <person name="Gariboldi M."/>
            <person name="Georgii-Hemming P."/>
            <person name="Gingeras T.R."/>
            <person name="Gojobori T."/>
            <person name="Green R.E."/>
            <person name="Gustincich S."/>
            <person name="Harbers M."/>
            <person name="Hayashi Y."/>
            <person name="Hensch T.K."/>
            <person name="Hirokawa N."/>
            <person name="Hill D."/>
            <person name="Huminiecki L."/>
            <person name="Iacono M."/>
            <person name="Ikeo K."/>
            <person name="Iwama A."/>
            <person name="Ishikawa T."/>
            <person name="Jakt M."/>
            <person name="Kanapin A."/>
            <person name="Katoh M."/>
            <person name="Kawasawa Y."/>
            <person name="Kelso J."/>
            <person name="Kitamura H."/>
            <person name="Kitano H."/>
            <person name="Kollias G."/>
            <person name="Krishnan S.P."/>
            <person name="Kruger A."/>
            <person name="Kummerfeld S.K."/>
            <person name="Kurochkin I.V."/>
            <person name="Lareau L.F."/>
            <person name="Lazarevic D."/>
            <person name="Lipovich L."/>
            <person name="Liu J."/>
            <person name="Liuni S."/>
            <person name="McWilliam S."/>
            <person name="Madan Babu M."/>
            <person name="Madera M."/>
            <person name="Marchionni L."/>
            <person name="Matsuda H."/>
            <person name="Matsuzawa S."/>
            <person name="Miki H."/>
            <person name="Mignone F."/>
            <person name="Miyake S."/>
            <person name="Morris K."/>
            <person name="Mottagui-Tabar S."/>
            <person name="Mulder N."/>
            <person name="Nakano N."/>
            <person name="Nakauchi H."/>
            <person name="Ng P."/>
            <person name="Nilsson R."/>
            <person name="Nishiguchi S."/>
            <person name="Nishikawa S."/>
            <person name="Nori F."/>
            <person name="Ohara O."/>
            <person name="Okazaki Y."/>
            <person name="Orlando V."/>
            <person name="Pang K.C."/>
            <person name="Pavan W.J."/>
            <person name="Pavesi G."/>
            <person name="Pesole G."/>
            <person name="Petrovsky N."/>
            <person name="Piazza S."/>
            <person name="Reed J."/>
            <person name="Reid J.F."/>
            <person name="Ring B.Z."/>
            <person name="Ringwald M."/>
            <person name="Rost B."/>
            <person name="Ruan Y."/>
            <person name="Salzberg S.L."/>
            <person name="Sandelin A."/>
            <person name="Schneider C."/>
            <person name="Schoenbach C."/>
            <person name="Sekiguchi K."/>
            <person name="Semple C.A."/>
            <person name="Seno S."/>
            <person name="Sessa L."/>
            <person name="Sheng Y."/>
            <person name="Shibata Y."/>
            <person name="Shimada H."/>
            <person name="Shimada K."/>
            <person name="Silva D."/>
            <person name="Sinclair B."/>
            <person name="Sperling S."/>
            <person name="Stupka E."/>
            <person name="Sugiura K."/>
            <person name="Sultana R."/>
            <person name="Takenaka Y."/>
            <person name="Taki K."/>
            <person name="Tammoja K."/>
            <person name="Tan S.L."/>
            <person name="Tang S."/>
            <person name="Taylor M.S."/>
            <person name="Tegner J."/>
            <person name="Teichmann S.A."/>
            <person name="Ueda H.R."/>
            <person name="van Nimwegen E."/>
            <person name="Verardo R."/>
            <person name="Wei C.L."/>
            <person name="Yagi K."/>
            <person name="Yamanishi H."/>
            <person name="Zabarovsky E."/>
            <person name="Zhu S."/>
            <person name="Zimmer A."/>
            <person name="Hide W."/>
            <person name="Bult C."/>
            <person name="Grimmond S.M."/>
            <person name="Teasdale R.D."/>
            <person name="Liu E.T."/>
            <person name="Brusic V."/>
            <person name="Quackenbush J."/>
            <person name="Wahlestedt C."/>
            <person name="Mattick J.S."/>
            <person name="Hume D.A."/>
            <person name="Kai C."/>
            <person name="Sasaki D."/>
            <person name="Tomaru Y."/>
            <person name="Fukuda S."/>
            <person name="Kanamori-Katayama M."/>
            <person name="Suzuki M."/>
            <person name="Aoki J."/>
            <person name="Arakawa T."/>
            <person name="Iida J."/>
            <person name="Imamura K."/>
            <person name="Itoh M."/>
            <person name="Kato T."/>
            <person name="Kawaji H."/>
            <person name="Kawagashira N."/>
            <person name="Kawashima T."/>
            <person name="Kojima M."/>
            <person name="Kondo S."/>
            <person name="Konno H."/>
            <person name="Nakano K."/>
            <person name="Ninomiya N."/>
            <person name="Nishio T."/>
            <person name="Okada M."/>
            <person name="Plessy C."/>
            <person name="Shibata K."/>
            <person name="Shiraki T."/>
            <person name="Suzuki S."/>
            <person name="Tagami M."/>
            <person name="Waki K."/>
            <person name="Watahiki A."/>
            <person name="Okamura-Oho Y."/>
            <person name="Suzuki H."/>
            <person name="Kawai J."/>
            <person name="Hayashizaki Y."/>
        </authorList>
    </citation>
    <scope>NUCLEOTIDE SEQUENCE [LARGE SCALE MRNA] (ISOFORM 2)</scope>
    <source>
        <strain>C57BL/6J</strain>
        <tissue>Skin</tissue>
        <tissue>Stomach</tissue>
    </source>
</reference>
<reference key="3">
    <citation type="journal article" date="2009" name="PLoS Biol.">
        <title>Lineage-specific biology revealed by a finished genome assembly of the mouse.</title>
        <authorList>
            <person name="Church D.M."/>
            <person name="Goodstadt L."/>
            <person name="Hillier L.W."/>
            <person name="Zody M.C."/>
            <person name="Goldstein S."/>
            <person name="She X."/>
            <person name="Bult C.J."/>
            <person name="Agarwala R."/>
            <person name="Cherry J.L."/>
            <person name="DiCuccio M."/>
            <person name="Hlavina W."/>
            <person name="Kapustin Y."/>
            <person name="Meric P."/>
            <person name="Maglott D."/>
            <person name="Birtle Z."/>
            <person name="Marques A.C."/>
            <person name="Graves T."/>
            <person name="Zhou S."/>
            <person name="Teague B."/>
            <person name="Potamousis K."/>
            <person name="Churas C."/>
            <person name="Place M."/>
            <person name="Herschleb J."/>
            <person name="Runnheim R."/>
            <person name="Forrest D."/>
            <person name="Amos-Landgraf J."/>
            <person name="Schwartz D.C."/>
            <person name="Cheng Z."/>
            <person name="Lindblad-Toh K."/>
            <person name="Eichler E.E."/>
            <person name="Ponting C.P."/>
        </authorList>
    </citation>
    <scope>NUCLEOTIDE SEQUENCE [LARGE SCALE GENOMIC DNA]</scope>
    <source>
        <strain>C57BL/6J</strain>
    </source>
</reference>
<reference key="4">
    <citation type="journal article" date="2002" name="Blood Cells Mol. Dis.">
        <title>Molecular and functional roles of duodenal cytochrome B (Dcytb) in iron metabolism.</title>
        <authorList>
            <person name="Latunde-Dada G.O."/>
            <person name="Van der Westhuizen J."/>
            <person name="Vulpe C.D."/>
            <person name="Anderson G.J."/>
            <person name="Simpson R.J."/>
            <person name="McKie A.T."/>
        </authorList>
    </citation>
    <scope>FUNCTION</scope>
    <scope>SUBCELLULAR LOCATION</scope>
    <scope>TISSUE SPECIFICITY</scope>
    <scope>INDUCTION</scope>
</reference>
<reference key="5">
    <citation type="journal article" date="2002" name="Gut">
        <title>Duodenal mRNA expression of iron related genes in response to iron loading and iron deficiency in four strains of mice.</title>
        <authorList>
            <person name="Dupic F."/>
            <person name="Fruchon S."/>
            <person name="Bensaid M."/>
            <person name="Loreal O."/>
            <person name="Brissot P."/>
            <person name="Borot N."/>
            <person name="Roth M.P."/>
            <person name="Coppin H."/>
        </authorList>
    </citation>
    <scope>INDUCTION</scope>
</reference>
<reference key="6">
    <citation type="journal article" date="2003" name="Nat. Genet.">
        <title>Regulatory defects in liver and intestine implicate abnormal hepcidin and Cybrd1 expression in mouse hemochromatosis.</title>
        <authorList>
            <person name="Muckenthaler M."/>
            <person name="Roy C.N."/>
            <person name="Custodio A.O."/>
            <person name="Minana B."/>
            <person name="deGraaf J."/>
            <person name="Montross L.K."/>
            <person name="Andrews N.C."/>
            <person name="Hentze M.W."/>
        </authorList>
    </citation>
    <scope>INDUCTION</scope>
</reference>
<reference key="7">
    <citation type="journal article" date="2005" name="Blood">
        <title>Cybrd1 (duodenal cytochrome b) is not necessary for dietary iron absorption in mice.</title>
        <authorList>
            <person name="Gunshin H."/>
            <person name="Starr C.N."/>
            <person name="Direnzo C."/>
            <person name="Fleming M.D."/>
            <person name="Jin J."/>
            <person name="Greer E.L."/>
            <person name="Sellers V.M."/>
            <person name="Galica S.M."/>
            <person name="Andrews N.C."/>
        </authorList>
    </citation>
    <scope>DISRUPTION PHENOTYPE</scope>
</reference>
<reference key="8">
    <citation type="journal article" date="2005" name="Blood">
        <title>The role of duodenal cytochrome b in intestinal iron absorption remains unclear.</title>
        <authorList>
            <person name="Frazer D.M."/>
            <person name="Wilkins S.J."/>
            <person name="Vulpe C.D."/>
            <person name="Anderson G.J."/>
        </authorList>
    </citation>
    <scope>COMMENT ON PUBMED:15961514</scope>
</reference>
<reference key="9">
    <citation type="journal article" date="2006" name="J. Biol. Chem.">
        <title>Human erythrocyte membranes contain a cytochrome b561 that may be involved in extracellular ascorbate recycling.</title>
        <authorList>
            <person name="Su D."/>
            <person name="May J.M."/>
            <person name="Koury M.J."/>
            <person name="Asard H."/>
        </authorList>
    </citation>
    <scope>FUNCTION</scope>
</reference>
<reference key="10">
    <citation type="journal article" date="2008" name="FEBS Lett.">
        <title>Dcytb (Cybrd1) functions as both a ferric and a cupric reductase in vitro.</title>
        <authorList>
            <person name="Wyman S."/>
            <person name="Simpson R.J."/>
            <person name="McKie A.T."/>
            <person name="Sharp P.A."/>
        </authorList>
    </citation>
    <scope>FUNCTION</scope>
    <scope>CATALYTIC ACTIVITY</scope>
</reference>
<comment type="function">
    <text evidence="1 4 6 9 10">Plasma membrane reductase that uses cytoplasmic ascorbate as an electron donor to reduce extracellular Fe(3+) into Fe(2+) (PubMed:17068337). Probably functions in dietary iron absorption at the brush border of duodenal enterocytes by producing Fe(2+), the divalent form of iron that can be transported into enterocytes (PubMed:11230685, PubMed:12547225). It is also able to reduce extracellular monodehydro-L-ascorbate and may be involved in extracellular ascorbate regeneration by erythrocytes in blood (PubMed:17068337). May also act as a ferrireductase in airway epithelial cells (By similarity). May also function as a cupric transmembrane reductase (PubMed:18498772).</text>
</comment>
<comment type="catalytic activity">
    <reaction evidence="1">
        <text>Fe(3+)(out) + L-ascorbate(in) = monodehydro-L-ascorbate radical(in) + Fe(2+)(out) + H(+)</text>
        <dbReference type="Rhea" id="RHEA:30403"/>
        <dbReference type="ChEBI" id="CHEBI:15378"/>
        <dbReference type="ChEBI" id="CHEBI:29033"/>
        <dbReference type="ChEBI" id="CHEBI:29034"/>
        <dbReference type="ChEBI" id="CHEBI:38290"/>
        <dbReference type="ChEBI" id="CHEBI:59513"/>
        <dbReference type="EC" id="7.2.1.3"/>
    </reaction>
    <physiologicalReaction direction="left-to-right" evidence="1">
        <dbReference type="Rhea" id="RHEA:30404"/>
    </physiologicalReaction>
</comment>
<comment type="catalytic activity">
    <reaction evidence="10">
        <text>Cu(2+)(out) + L-ascorbate(in) = Cu(+)(out) + monodehydro-L-ascorbate radical(in) + H(+)</text>
        <dbReference type="Rhea" id="RHEA:66656"/>
        <dbReference type="ChEBI" id="CHEBI:15378"/>
        <dbReference type="ChEBI" id="CHEBI:29036"/>
        <dbReference type="ChEBI" id="CHEBI:38290"/>
        <dbReference type="ChEBI" id="CHEBI:49552"/>
        <dbReference type="ChEBI" id="CHEBI:59513"/>
    </reaction>
    <physiologicalReaction direction="left-to-right" evidence="10">
        <dbReference type="Rhea" id="RHEA:66657"/>
    </physiologicalReaction>
</comment>
<comment type="catalytic activity">
    <reaction evidence="1">
        <text>monodehydro-L-ascorbate radical(out) + L-ascorbate(in) = monodehydro-L-ascorbate radical(in) + L-ascorbate(out)</text>
        <dbReference type="Rhea" id="RHEA:66524"/>
        <dbReference type="ChEBI" id="CHEBI:38290"/>
        <dbReference type="ChEBI" id="CHEBI:59513"/>
    </reaction>
    <physiologicalReaction direction="left-to-right" evidence="1">
        <dbReference type="Rhea" id="RHEA:66525"/>
    </physiologicalReaction>
</comment>
<comment type="cofactor">
    <cofactor evidence="1">
        <name>heme b</name>
        <dbReference type="ChEBI" id="CHEBI:60344"/>
    </cofactor>
    <text evidence="1">Binds 2 heme b groups non-covalently.</text>
</comment>
<comment type="subunit">
    <text evidence="1">Homodimer.</text>
</comment>
<comment type="subcellular location">
    <subcellularLocation>
        <location evidence="1">Cell membrane</location>
        <topology evidence="1">Multi-pass membrane protein</topology>
    </subcellularLocation>
    <subcellularLocation>
        <location evidence="14 15">Apical cell membrane</location>
        <topology evidence="1">Multi-pass membrane protein</topology>
    </subcellularLocation>
    <text evidence="4 6">Localized at the brush border of duodenal cells.</text>
</comment>
<comment type="alternative products">
    <event type="alternative splicing"/>
    <isoform>
        <id>Q925G2-1</id>
        <name>1</name>
        <sequence type="displayed"/>
    </isoform>
    <isoform>
        <id>Q925G2-2</id>
        <name>2</name>
        <sequence type="described" ref="VSP_030396 VSP_030397"/>
    </isoform>
</comment>
<comment type="tissue specificity">
    <text evidence="4 6">Highly expressed in the brush-border membrane of duodenal enterocytes (at protein level). Also expressed in liver and spleen.</text>
</comment>
<comment type="induction">
    <text evidence="4 5 6 7">By iron deficiency. Up-regulated in duodenal mucosa of mice lacking transferrin or Hfe (at protein level).</text>
</comment>
<comment type="disruption phenotype">
    <text evidence="8">Mice are normal and do not display iron stores defects, even in the setting of iron deficiency. These results, reported by PubMed:15961514, suggest that Cybrd1 is not an essential component of intestinal iron apparatus. However, according to PubMed:16326980, no direct measurements of iron absorption were made by PubMed:15961514, suggesting that final conclusions can be drawn only when direct iron absorption studies are carried out or mice are maintained on a diet containing ferric iron only.</text>
</comment>
<feature type="chain" id="PRO_0000314831" description="Plasma membrane ascorbate-dependent reductase CYBRD1">
    <location>
        <begin position="1"/>
        <end position="290"/>
    </location>
</feature>
<feature type="topological domain" description="Cytoplasmic" evidence="1">
    <location>
        <begin position="1"/>
        <end position="7"/>
    </location>
</feature>
<feature type="transmembrane region" description="Helical; Name=1" evidence="1">
    <location>
        <begin position="8"/>
        <end position="32"/>
    </location>
</feature>
<feature type="topological domain" description="Extracellular" evidence="1">
    <location>
        <begin position="33"/>
        <end position="47"/>
    </location>
</feature>
<feature type="transmembrane region" description="Helical; Name=2" evidence="1">
    <location>
        <begin position="48"/>
        <end position="69"/>
    </location>
</feature>
<feature type="topological domain" description="Cytoplasmic" evidence="1">
    <location>
        <begin position="70"/>
        <end position="78"/>
    </location>
</feature>
<feature type="transmembrane region" description="Helical; Name=3" evidence="1">
    <location>
        <begin position="79"/>
        <end position="105"/>
    </location>
</feature>
<feature type="topological domain" description="Extracellular" evidence="1">
    <location>
        <begin position="106"/>
        <end position="118"/>
    </location>
</feature>
<feature type="transmembrane region" description="Helical; Name=4" evidence="1">
    <location>
        <begin position="119"/>
        <end position="144"/>
    </location>
</feature>
<feature type="topological domain" description="Cytoplasmic" evidence="1">
    <location>
        <begin position="145"/>
        <end position="151"/>
    </location>
</feature>
<feature type="transmembrane region" description="Helical; Name=5" evidence="1">
    <location>
        <begin position="152"/>
        <end position="179"/>
    </location>
</feature>
<feature type="topological domain" description="Extracellular" evidence="1">
    <location>
        <begin position="180"/>
        <end position="197"/>
    </location>
</feature>
<feature type="transmembrane region" description="Helical; Name=6" evidence="1">
    <location>
        <begin position="198"/>
        <end position="222"/>
    </location>
</feature>
<feature type="topological domain" description="Cytoplasmic" evidence="1">
    <location>
        <begin position="223"/>
        <end position="290"/>
    </location>
</feature>
<feature type="domain" description="Cytochrome b561" evidence="2">
    <location>
        <begin position="15"/>
        <end position="220"/>
    </location>
</feature>
<feature type="region of interest" description="Disordered" evidence="3">
    <location>
        <begin position="257"/>
        <end position="290"/>
    </location>
</feature>
<feature type="compositionally biased region" description="Low complexity" evidence="3">
    <location>
        <begin position="260"/>
        <end position="272"/>
    </location>
</feature>
<feature type="binding site" description="axial binding residue" evidence="1">
    <location>
        <position position="50"/>
    </location>
    <ligand>
        <name>heme b</name>
        <dbReference type="ChEBI" id="CHEBI:60344"/>
        <label>1</label>
    </ligand>
    <ligandPart>
        <name>Fe</name>
        <dbReference type="ChEBI" id="CHEBI:18248"/>
    </ligandPart>
</feature>
<feature type="binding site" evidence="1">
    <location>
        <position position="70"/>
    </location>
    <ligand>
        <name>heme b</name>
        <dbReference type="ChEBI" id="CHEBI:60344"/>
        <label>2</label>
    </ligand>
</feature>
<feature type="binding site" evidence="1">
    <location>
        <position position="79"/>
    </location>
    <ligand>
        <name>heme b</name>
        <dbReference type="ChEBI" id="CHEBI:60344"/>
        <label>2</label>
    </ligand>
</feature>
<feature type="binding site" evidence="1">
    <location>
        <position position="79"/>
    </location>
    <ligand>
        <name>L-ascorbate</name>
        <dbReference type="ChEBI" id="CHEBI:38290"/>
    </ligand>
</feature>
<feature type="binding site" evidence="1">
    <location>
        <position position="83"/>
    </location>
    <ligand>
        <name>L-ascorbate</name>
        <dbReference type="ChEBI" id="CHEBI:38290"/>
    </ligand>
</feature>
<feature type="binding site" description="axial binding residue" evidence="1">
    <location>
        <position position="86"/>
    </location>
    <ligand>
        <name>heme b</name>
        <dbReference type="ChEBI" id="CHEBI:60344"/>
        <label>2</label>
    </ligand>
    <ligandPart>
        <name>Fe</name>
        <dbReference type="ChEBI" id="CHEBI:18248"/>
    </ligandPart>
</feature>
<feature type="binding site" evidence="1">
    <location>
        <position position="108"/>
    </location>
    <ligand>
        <name>Fe(3+)</name>
        <dbReference type="ChEBI" id="CHEBI:29034"/>
        <note>substrate</note>
    </ligand>
</feature>
<feature type="binding site" evidence="1">
    <location>
        <begin position="115"/>
        <end position="118"/>
    </location>
    <ligand>
        <name>heme b</name>
        <dbReference type="ChEBI" id="CHEBI:60344"/>
        <label>1</label>
    </ligand>
</feature>
<feature type="binding site" description="axial binding residue" evidence="1">
    <location>
        <position position="120"/>
    </location>
    <ligand>
        <name>heme b</name>
        <dbReference type="ChEBI" id="CHEBI:60344"/>
        <label>1</label>
    </ligand>
    <ligandPart>
        <name>Fe</name>
        <dbReference type="ChEBI" id="CHEBI:18248"/>
    </ligandPart>
</feature>
<feature type="binding site" evidence="1">
    <location>
        <position position="152"/>
    </location>
    <ligand>
        <name>L-ascorbate</name>
        <dbReference type="ChEBI" id="CHEBI:38290"/>
    </ligand>
</feature>
<feature type="binding site" description="axial binding residue" evidence="1">
    <location>
        <position position="159"/>
    </location>
    <ligand>
        <name>heme b</name>
        <dbReference type="ChEBI" id="CHEBI:60344"/>
        <label>2</label>
    </ligand>
    <ligandPart>
        <name>Fe</name>
        <dbReference type="ChEBI" id="CHEBI:18248"/>
    </ligandPart>
</feature>
<feature type="binding site" evidence="1">
    <location>
        <position position="180"/>
    </location>
    <ligand>
        <name>heme b</name>
        <dbReference type="ChEBI" id="CHEBI:60344"/>
        <label>1</label>
    </ligand>
</feature>
<feature type="binding site" evidence="1">
    <location>
        <position position="225"/>
    </location>
    <ligand>
        <name>heme b</name>
        <dbReference type="ChEBI" id="CHEBI:60344"/>
        <label>2</label>
    </ligand>
</feature>
<feature type="modified residue" description="Phosphoserine" evidence="1">
    <location>
        <position position="232"/>
    </location>
</feature>
<feature type="modified residue" description="Phosphothreonine" evidence="1">
    <location>
        <position position="289"/>
    </location>
</feature>
<feature type="splice variant" id="VSP_030396" description="In isoform 2." evidence="12">
    <original>EC</original>
    <variation>D</variation>
    <location>
        <begin position="243"/>
        <end position="244"/>
    </location>
</feature>
<feature type="splice variant" id="VSP_030397" description="In isoform 2." evidence="12">
    <location>
        <begin position="261"/>
        <end position="263"/>
    </location>
</feature>
<feature type="sequence conflict" description="In Ref. 1; AAK50909." evidence="13" ref="1">
    <original>H</original>
    <variation>R</variation>
    <location>
        <position position="188"/>
    </location>
</feature>
<protein>
    <recommendedName>
        <fullName evidence="1">Plasma membrane ascorbate-dependent reductase CYBRD1</fullName>
        <ecNumber evidence="1">7.2.1.3</ecNumber>
    </recommendedName>
    <alternativeName>
        <fullName>Cytochrome b reductase 1</fullName>
    </alternativeName>
    <alternativeName>
        <fullName evidence="11">Duodenal cytochrome b</fullName>
    </alternativeName>
</protein>
<keyword id="KW-0025">Alternative splicing</keyword>
<keyword id="KW-1003">Cell membrane</keyword>
<keyword id="KW-0249">Electron transport</keyword>
<keyword id="KW-0349">Heme</keyword>
<keyword id="KW-0408">Iron</keyword>
<keyword id="KW-0472">Membrane</keyword>
<keyword id="KW-0479">Metal-binding</keyword>
<keyword id="KW-0560">Oxidoreductase</keyword>
<keyword id="KW-0597">Phosphoprotein</keyword>
<keyword id="KW-1185">Reference proteome</keyword>
<keyword id="KW-1278">Translocase</keyword>
<keyword id="KW-0812">Transmembrane</keyword>
<keyword id="KW-1133">Transmembrane helix</keyword>
<keyword id="KW-0813">Transport</keyword>
<organism>
    <name type="scientific">Mus musculus</name>
    <name type="common">Mouse</name>
    <dbReference type="NCBI Taxonomy" id="10090"/>
    <lineage>
        <taxon>Eukaryota</taxon>
        <taxon>Metazoa</taxon>
        <taxon>Chordata</taxon>
        <taxon>Craniata</taxon>
        <taxon>Vertebrata</taxon>
        <taxon>Euteleostomi</taxon>
        <taxon>Mammalia</taxon>
        <taxon>Eutheria</taxon>
        <taxon>Euarchontoglires</taxon>
        <taxon>Glires</taxon>
        <taxon>Rodentia</taxon>
        <taxon>Myomorpha</taxon>
        <taxon>Muroidea</taxon>
        <taxon>Muridae</taxon>
        <taxon>Murinae</taxon>
        <taxon>Mus</taxon>
        <taxon>Mus</taxon>
    </lineage>
</organism>
<gene>
    <name evidence="16" type="primary">Cybrd1</name>
    <name evidence="11" type="synonym">Dcytb</name>
</gene>
<name>CYBR1_MOUSE</name>
<sequence>MAMEGYRGFLGLLVSALLVGFLSVIFVLIWVLHFREGLGWNGSGLEFNWHPVLAVTGFVFIQGIAIIVYRLPWTWKCSKLLMKSIHAGLNAVAAILAIISVVAVFEYHNVQKVPHMYSLHSWVGLTALILYIQQLVVGFFVFLLPWAPPSLRAIVMPIHVYSGLLLFGTVIATVLMGVTEKLFFVLKHPSYHSFPPEGVFTNTLGLLILVFGALIFWIVTRPQWKRPREPGSVPLQLNGGNAECRMEGAIAISSAHSMDAADPADAESSSEGAARKRTLGLADSGQRSTM</sequence>
<dbReference type="EC" id="7.2.1.3" evidence="1"/>
<dbReference type="EMBL" id="AF354666">
    <property type="protein sequence ID" value="AAK50909.1"/>
    <property type="molecule type" value="mRNA"/>
</dbReference>
<dbReference type="EMBL" id="AK008849">
    <property type="protein sequence ID" value="BAB25928.1"/>
    <property type="molecule type" value="mRNA"/>
</dbReference>
<dbReference type="EMBL" id="AK029112">
    <property type="protein sequence ID" value="BAC26304.1"/>
    <property type="molecule type" value="mRNA"/>
</dbReference>
<dbReference type="EMBL" id="AL929228">
    <property type="status" value="NOT_ANNOTATED_CDS"/>
    <property type="molecule type" value="Genomic_DNA"/>
</dbReference>
<dbReference type="CCDS" id="CCDS50603.1">
    <molecule id="Q925G2-1"/>
</dbReference>
<dbReference type="RefSeq" id="NP_082869.2">
    <molecule id="Q925G2-1"/>
    <property type="nucleotide sequence ID" value="NM_028593.2"/>
</dbReference>
<dbReference type="SMR" id="Q925G2"/>
<dbReference type="FunCoup" id="Q925G2">
    <property type="interactions" value="142"/>
</dbReference>
<dbReference type="STRING" id="10090.ENSMUSP00000028403"/>
<dbReference type="iPTMnet" id="Q925G2"/>
<dbReference type="PhosphoSitePlus" id="Q925G2"/>
<dbReference type="jPOST" id="Q925G2"/>
<dbReference type="PaxDb" id="10090-ENSMUSP00000028403"/>
<dbReference type="ProteomicsDB" id="283995">
    <molecule id="Q925G2-1"/>
</dbReference>
<dbReference type="ProteomicsDB" id="283996">
    <molecule id="Q925G2-2"/>
</dbReference>
<dbReference type="Antibodypedia" id="19375">
    <property type="antibodies" value="101 antibodies from 28 providers"/>
</dbReference>
<dbReference type="Ensembl" id="ENSMUST00000028403.3">
    <molecule id="Q925G2-1"/>
    <property type="protein sequence ID" value="ENSMUSP00000028403.3"/>
    <property type="gene ID" value="ENSMUSG00000027015.5"/>
</dbReference>
<dbReference type="GeneID" id="73649"/>
<dbReference type="KEGG" id="mmu:73649"/>
<dbReference type="UCSC" id="uc008kaf.2">
    <molecule id="Q925G2-1"/>
    <property type="organism name" value="mouse"/>
</dbReference>
<dbReference type="AGR" id="MGI:2654575"/>
<dbReference type="CTD" id="79901"/>
<dbReference type="MGI" id="MGI:2654575">
    <property type="gene designation" value="Cybrd1"/>
</dbReference>
<dbReference type="VEuPathDB" id="HostDB:ENSMUSG00000027015"/>
<dbReference type="eggNOG" id="KOG1619">
    <property type="taxonomic scope" value="Eukaryota"/>
</dbReference>
<dbReference type="GeneTree" id="ENSGT00950000183197"/>
<dbReference type="HOGENOM" id="CLU_069712_1_2_1"/>
<dbReference type="InParanoid" id="Q925G2"/>
<dbReference type="OMA" id="NWHPVLA"/>
<dbReference type="OrthoDB" id="907479at2759"/>
<dbReference type="PhylomeDB" id="Q925G2"/>
<dbReference type="TreeFam" id="TF314222"/>
<dbReference type="Reactome" id="R-MMU-917937">
    <property type="pathway name" value="Iron uptake and transport"/>
</dbReference>
<dbReference type="BioGRID-ORCS" id="73649">
    <property type="hits" value="3 hits in 78 CRISPR screens"/>
</dbReference>
<dbReference type="ChiTaRS" id="Cybrd1">
    <property type="organism name" value="mouse"/>
</dbReference>
<dbReference type="PRO" id="PR:Q925G2"/>
<dbReference type="Proteomes" id="UP000000589">
    <property type="component" value="Chromosome 2"/>
</dbReference>
<dbReference type="RNAct" id="Q925G2">
    <property type="molecule type" value="protein"/>
</dbReference>
<dbReference type="Bgee" id="ENSMUSG00000027015">
    <property type="expression patterns" value="Expressed in epithelium of cochlear duct and 149 other cell types or tissues"/>
</dbReference>
<dbReference type="GO" id="GO:0016324">
    <property type="term" value="C:apical plasma membrane"/>
    <property type="evidence" value="ECO:0000250"/>
    <property type="project" value="UniProtKB"/>
</dbReference>
<dbReference type="GO" id="GO:0031526">
    <property type="term" value="C:brush border membrane"/>
    <property type="evidence" value="ECO:0000314"/>
    <property type="project" value="MGI"/>
</dbReference>
<dbReference type="GO" id="GO:0016020">
    <property type="term" value="C:membrane"/>
    <property type="evidence" value="ECO:0000250"/>
    <property type="project" value="UniProtKB"/>
</dbReference>
<dbReference type="GO" id="GO:0042802">
    <property type="term" value="F:identical protein binding"/>
    <property type="evidence" value="ECO:0000250"/>
    <property type="project" value="UniProtKB"/>
</dbReference>
<dbReference type="GO" id="GO:0046872">
    <property type="term" value="F:metal ion binding"/>
    <property type="evidence" value="ECO:0007669"/>
    <property type="project" value="UniProtKB-KW"/>
</dbReference>
<dbReference type="GO" id="GO:0140571">
    <property type="term" value="F:transmembrane ascorbate ferrireductase activity"/>
    <property type="evidence" value="ECO:0000314"/>
    <property type="project" value="UniProtKB"/>
</dbReference>
<dbReference type="GO" id="GO:0140575">
    <property type="term" value="F:transmembrane monodehydroascorbate reductase activity"/>
    <property type="evidence" value="ECO:0000250"/>
    <property type="project" value="UniProtKB"/>
</dbReference>
<dbReference type="GO" id="GO:0140576">
    <property type="term" value="P:ascorbate homeostasis"/>
    <property type="evidence" value="ECO:0000250"/>
    <property type="project" value="UniProtKB"/>
</dbReference>
<dbReference type="GO" id="GO:0006879">
    <property type="term" value="P:intracellular iron ion homeostasis"/>
    <property type="evidence" value="ECO:0007669"/>
    <property type="project" value="Ensembl"/>
</dbReference>
<dbReference type="GO" id="GO:0060586">
    <property type="term" value="P:multicellular organismal-level iron ion homeostasis"/>
    <property type="evidence" value="ECO:0000250"/>
    <property type="project" value="UniProtKB"/>
</dbReference>
<dbReference type="GO" id="GO:0010039">
    <property type="term" value="P:response to iron ion"/>
    <property type="evidence" value="ECO:0000314"/>
    <property type="project" value="MGI"/>
</dbReference>
<dbReference type="FunFam" id="1.20.120.1770:FF:000001">
    <property type="entry name" value="Cytochrome b reductase 1"/>
    <property type="match status" value="1"/>
</dbReference>
<dbReference type="Gene3D" id="1.20.120.1770">
    <property type="match status" value="1"/>
</dbReference>
<dbReference type="InterPro" id="IPR043205">
    <property type="entry name" value="CYB561/CYBRD1-like"/>
</dbReference>
<dbReference type="InterPro" id="IPR006593">
    <property type="entry name" value="Cyt_b561/ferric_Rdtase_TM"/>
</dbReference>
<dbReference type="PANTHER" id="PTHR10106">
    <property type="entry name" value="CYTOCHROME B561-RELATED"/>
    <property type="match status" value="1"/>
</dbReference>
<dbReference type="PANTHER" id="PTHR10106:SF12">
    <property type="entry name" value="PLASMA MEMBRANE ASCORBATE-DEPENDENT REDUCTASE CYBRD1"/>
    <property type="match status" value="1"/>
</dbReference>
<dbReference type="Pfam" id="PF03188">
    <property type="entry name" value="Cytochrom_B561"/>
    <property type="match status" value="1"/>
</dbReference>
<dbReference type="SMART" id="SM00665">
    <property type="entry name" value="B561"/>
    <property type="match status" value="1"/>
</dbReference>
<dbReference type="PROSITE" id="PS50939">
    <property type="entry name" value="CYTOCHROME_B561"/>
    <property type="match status" value="1"/>
</dbReference>
<evidence type="ECO:0000250" key="1">
    <source>
        <dbReference type="UniProtKB" id="Q53TN4"/>
    </source>
</evidence>
<evidence type="ECO:0000255" key="2">
    <source>
        <dbReference type="PROSITE-ProRule" id="PRU00242"/>
    </source>
</evidence>
<evidence type="ECO:0000256" key="3">
    <source>
        <dbReference type="SAM" id="MobiDB-lite"/>
    </source>
</evidence>
<evidence type="ECO:0000269" key="4">
    <source>
    </source>
</evidence>
<evidence type="ECO:0000269" key="5">
    <source>
    </source>
</evidence>
<evidence type="ECO:0000269" key="6">
    <source>
    </source>
</evidence>
<evidence type="ECO:0000269" key="7">
    <source>
    </source>
</evidence>
<evidence type="ECO:0000269" key="8">
    <source>
    </source>
</evidence>
<evidence type="ECO:0000269" key="9">
    <source>
    </source>
</evidence>
<evidence type="ECO:0000269" key="10">
    <source>
    </source>
</evidence>
<evidence type="ECO:0000303" key="11">
    <source>
    </source>
</evidence>
<evidence type="ECO:0000303" key="12">
    <source>
    </source>
</evidence>
<evidence type="ECO:0000305" key="13"/>
<evidence type="ECO:0000305" key="14">
    <source>
    </source>
</evidence>
<evidence type="ECO:0000305" key="15">
    <source>
    </source>
</evidence>
<evidence type="ECO:0000312" key="16">
    <source>
        <dbReference type="MGI" id="MGI:2654575"/>
    </source>
</evidence>
<proteinExistence type="evidence at protein level"/>
<accession>Q925G2</accession>
<accession>A2AUU8</accession>
<accession>Q9D7U1</accession>